<proteinExistence type="inferred from homology"/>
<name>YL881_MIMIV</name>
<evidence type="ECO:0000255" key="1"/>
<protein>
    <recommendedName>
        <fullName>Uncharacterized protein L881</fullName>
    </recommendedName>
</protein>
<organism>
    <name type="scientific">Acanthamoeba polyphaga mimivirus</name>
    <name type="common">APMV</name>
    <dbReference type="NCBI Taxonomy" id="212035"/>
    <lineage>
        <taxon>Viruses</taxon>
        <taxon>Varidnaviria</taxon>
        <taxon>Bamfordvirae</taxon>
        <taxon>Nucleocytoviricota</taxon>
        <taxon>Megaviricetes</taxon>
        <taxon>Imitervirales</taxon>
        <taxon>Mimiviridae</taxon>
        <taxon>Megamimivirinae</taxon>
        <taxon>Mimivirus</taxon>
        <taxon>Mimivirus bradfordmassiliense</taxon>
    </lineage>
</organism>
<gene>
    <name type="ordered locus">MIMI_L881</name>
</gene>
<dbReference type="EMBL" id="AY653733">
    <property type="protein sequence ID" value="AAV51138.1"/>
    <property type="molecule type" value="Genomic_DNA"/>
</dbReference>
<dbReference type="KEGG" id="vg:9925550"/>
<dbReference type="OrthoDB" id="5122at10239"/>
<dbReference type="Proteomes" id="UP000001134">
    <property type="component" value="Genome"/>
</dbReference>
<dbReference type="Gene3D" id="2.10.25.10">
    <property type="entry name" value="Laminin"/>
    <property type="match status" value="1"/>
</dbReference>
<dbReference type="InterPro" id="IPR000742">
    <property type="entry name" value="EGF-like_dom"/>
</dbReference>
<reference key="1">
    <citation type="journal article" date="2004" name="Science">
        <title>The 1.2-megabase genome sequence of Mimivirus.</title>
        <authorList>
            <person name="Raoult D."/>
            <person name="Audic S."/>
            <person name="Robert C."/>
            <person name="Abergel C."/>
            <person name="Renesto P."/>
            <person name="Ogata H."/>
            <person name="La Scola B."/>
            <person name="Susan M."/>
            <person name="Claverie J.-M."/>
        </authorList>
    </citation>
    <scope>NUCLEOTIDE SEQUENCE [LARGE SCALE GENOMIC DNA]</scope>
    <source>
        <strain>Rowbotham-Bradford</strain>
    </source>
</reference>
<feature type="signal peptide" evidence="1">
    <location>
        <begin position="1"/>
        <end position="16"/>
    </location>
</feature>
<feature type="chain" id="PRO_0000253998" description="Uncharacterized protein L881">
    <location>
        <begin position="17"/>
        <end position="195"/>
    </location>
</feature>
<organismHost>
    <name type="scientific">Acanthamoeba polyphaga</name>
    <name type="common">Amoeba</name>
    <dbReference type="NCBI Taxonomy" id="5757"/>
</organismHost>
<sequence length="195" mass="22426">MIRTIIVFMLLTISFGQNIIDYHCDNCDENAECMVELKEDATFSHYKCACKSGYSGDGYICLANKCQFDYECPSSYFHGECNNGICACRENNGFVWNPSFDNLIDRDVCKCEYGSNLYWFGGRAICIPNGQCMEKYHCTSTYEFYKISCQEPGSYGNFGICVCNYGYQQNDNECYCPPHKKEVWDSSNPRYICLE</sequence>
<keyword id="KW-1185">Reference proteome</keyword>
<keyword id="KW-0732">Signal</keyword>
<accession>Q5UQX7</accession>